<keyword id="KW-0067">ATP-binding</keyword>
<keyword id="KW-0347">Helicase</keyword>
<keyword id="KW-0378">Hydrolase</keyword>
<keyword id="KW-0547">Nucleotide-binding</keyword>
<keyword id="KW-0539">Nucleus</keyword>
<keyword id="KW-1185">Reference proteome</keyword>
<keyword id="KW-0690">Ribosome biogenesis</keyword>
<keyword id="KW-0694">RNA-binding</keyword>
<keyword id="KW-0698">rRNA processing</keyword>
<gene>
    <name type="primary">dbp3</name>
    <name type="ORF">ATEG_05621</name>
</gene>
<protein>
    <recommendedName>
        <fullName>ATP-dependent RNA helicase dbp3</fullName>
        <ecNumber>3.6.4.13</ecNumber>
    </recommendedName>
</protein>
<reference key="1">
    <citation type="submission" date="2005-09" db="EMBL/GenBank/DDBJ databases">
        <title>Annotation of the Aspergillus terreus NIH2624 genome.</title>
        <authorList>
            <person name="Birren B.W."/>
            <person name="Lander E.S."/>
            <person name="Galagan J.E."/>
            <person name="Nusbaum C."/>
            <person name="Devon K."/>
            <person name="Henn M."/>
            <person name="Ma L.-J."/>
            <person name="Jaffe D.B."/>
            <person name="Butler J."/>
            <person name="Alvarez P."/>
            <person name="Gnerre S."/>
            <person name="Grabherr M."/>
            <person name="Kleber M."/>
            <person name="Mauceli E.W."/>
            <person name="Brockman W."/>
            <person name="Rounsley S."/>
            <person name="Young S.K."/>
            <person name="LaButti K."/>
            <person name="Pushparaj V."/>
            <person name="DeCaprio D."/>
            <person name="Crawford M."/>
            <person name="Koehrsen M."/>
            <person name="Engels R."/>
            <person name="Montgomery P."/>
            <person name="Pearson M."/>
            <person name="Howarth C."/>
            <person name="Larson L."/>
            <person name="Luoma S."/>
            <person name="White J."/>
            <person name="Alvarado L."/>
            <person name="Kodira C.D."/>
            <person name="Zeng Q."/>
            <person name="Oleary S."/>
            <person name="Yandava C."/>
            <person name="Denning D.W."/>
            <person name="Nierman W.C."/>
            <person name="Milne T."/>
            <person name="Madden K."/>
        </authorList>
    </citation>
    <scope>NUCLEOTIDE SEQUENCE [LARGE SCALE GENOMIC DNA]</scope>
    <source>
        <strain>NIH 2624 / FGSC A1156</strain>
    </source>
</reference>
<comment type="function">
    <text evidence="1">ATP-dependent RNA helicase required for 60S ribosomal subunit synthesis. Involved in efficient pre-rRNA processing, predominantly at site A3, which is necessary for the normal formation of 25S and 5.8S rRNAs (By similarity).</text>
</comment>
<comment type="catalytic activity">
    <reaction>
        <text>ATP + H2O = ADP + phosphate + H(+)</text>
        <dbReference type="Rhea" id="RHEA:13065"/>
        <dbReference type="ChEBI" id="CHEBI:15377"/>
        <dbReference type="ChEBI" id="CHEBI:15378"/>
        <dbReference type="ChEBI" id="CHEBI:30616"/>
        <dbReference type="ChEBI" id="CHEBI:43474"/>
        <dbReference type="ChEBI" id="CHEBI:456216"/>
        <dbReference type="EC" id="3.6.4.13"/>
    </reaction>
</comment>
<comment type="subcellular location">
    <subcellularLocation>
        <location evidence="1">Nucleus</location>
        <location evidence="1">Nucleolus</location>
    </subcellularLocation>
</comment>
<comment type="domain">
    <text>The Q motif is unique to and characteristic of the DEAD box family of RNA helicases and controls ATP binding and hydrolysis.</text>
</comment>
<comment type="similarity">
    <text evidence="5">Belongs to the DEAD box helicase family. DDX5/DBP2 subfamily.</text>
</comment>
<proteinExistence type="inferred from homology"/>
<accession>Q0CL13</accession>
<organism>
    <name type="scientific">Aspergillus terreus (strain NIH 2624 / FGSC A1156)</name>
    <dbReference type="NCBI Taxonomy" id="341663"/>
    <lineage>
        <taxon>Eukaryota</taxon>
        <taxon>Fungi</taxon>
        <taxon>Dikarya</taxon>
        <taxon>Ascomycota</taxon>
        <taxon>Pezizomycotina</taxon>
        <taxon>Eurotiomycetes</taxon>
        <taxon>Eurotiomycetidae</taxon>
        <taxon>Eurotiales</taxon>
        <taxon>Aspergillaceae</taxon>
        <taxon>Aspergillus</taxon>
        <taxon>Aspergillus subgen. Circumdati</taxon>
    </lineage>
</organism>
<sequence length="493" mass="54389">MTKRDYQNDTTAESRPTKKSKGEKKVKETKEKKEKKVKSYVQNPSLDTLPQAEIDEFLASNSIKITDTLPDATPLRPIISFSHLPECNSNLYEQLNSFKSPTSIQSATWPLLFGGRDVIGIAETGSGKTLAFGLPCLKKIEDSKKKKSKPYQPMAVIISPTRELAMQIHDQLQKFAGPVGAKVACIFGGVRKDEQREVLKTANIVVATPGRLKDLQNDGSVDLGKVRYLVLDEADRMLDKGFEQDIKDIIQPMPVSKRQTVMFTATWPPVVRELASTFMSSPVTVTIGGDPSADPRANTRIKQVVEVVKPHEKEGRLVQLLKQHQRGAEKVLAFCLYKKEATRIERFLQSRGFKVAGIHGDLSQQERFRSLDAFKTGAATVLVATDVAARGLDIPAVKLVINVTFPLTVEDYVHRIGRTGRAGAEGHAITLFTETDKAQSGALINVLKAAGQEVPEELLKFGGTVKKKQHDAYGAFFKDVDTTKAATKIVFDD</sequence>
<dbReference type="EC" id="3.6.4.13"/>
<dbReference type="EMBL" id="CH476600">
    <property type="protein sequence ID" value="EAU34690.1"/>
    <property type="molecule type" value="Genomic_DNA"/>
</dbReference>
<dbReference type="RefSeq" id="XP_001214799.1">
    <property type="nucleotide sequence ID" value="XM_001214799.1"/>
</dbReference>
<dbReference type="SMR" id="Q0CL13"/>
<dbReference type="STRING" id="341663.Q0CL13"/>
<dbReference type="EnsemblFungi" id="EAU34690">
    <property type="protein sequence ID" value="EAU34690"/>
    <property type="gene ID" value="ATEG_05621"/>
</dbReference>
<dbReference type="GeneID" id="4320754"/>
<dbReference type="VEuPathDB" id="FungiDB:ATEG_05621"/>
<dbReference type="eggNOG" id="KOG0331">
    <property type="taxonomic scope" value="Eukaryota"/>
</dbReference>
<dbReference type="HOGENOM" id="CLU_003041_1_5_1"/>
<dbReference type="OMA" id="KKTHDMY"/>
<dbReference type="OrthoDB" id="196131at2759"/>
<dbReference type="Proteomes" id="UP000007963">
    <property type="component" value="Unassembled WGS sequence"/>
</dbReference>
<dbReference type="GO" id="GO:0005730">
    <property type="term" value="C:nucleolus"/>
    <property type="evidence" value="ECO:0007669"/>
    <property type="project" value="UniProtKB-SubCell"/>
</dbReference>
<dbReference type="GO" id="GO:0030687">
    <property type="term" value="C:preribosome, large subunit precursor"/>
    <property type="evidence" value="ECO:0007669"/>
    <property type="project" value="EnsemblFungi"/>
</dbReference>
<dbReference type="GO" id="GO:0005524">
    <property type="term" value="F:ATP binding"/>
    <property type="evidence" value="ECO:0007669"/>
    <property type="project" value="UniProtKB-KW"/>
</dbReference>
<dbReference type="GO" id="GO:0016887">
    <property type="term" value="F:ATP hydrolysis activity"/>
    <property type="evidence" value="ECO:0007669"/>
    <property type="project" value="RHEA"/>
</dbReference>
<dbReference type="GO" id="GO:0003723">
    <property type="term" value="F:RNA binding"/>
    <property type="evidence" value="ECO:0007669"/>
    <property type="project" value="UniProtKB-KW"/>
</dbReference>
<dbReference type="GO" id="GO:0003724">
    <property type="term" value="F:RNA helicase activity"/>
    <property type="evidence" value="ECO:0007669"/>
    <property type="project" value="UniProtKB-EC"/>
</dbReference>
<dbReference type="GO" id="GO:0000464">
    <property type="term" value="P:endonucleolytic cleavage in ITS1 upstream of 5.8S rRNA from tricistronic rRNA transcript (SSU-rRNA, 5.8S rRNA, LSU-rRNA)"/>
    <property type="evidence" value="ECO:0007669"/>
    <property type="project" value="EnsemblFungi"/>
</dbReference>
<dbReference type="CDD" id="cd00268">
    <property type="entry name" value="DEADc"/>
    <property type="match status" value="1"/>
</dbReference>
<dbReference type="CDD" id="cd18787">
    <property type="entry name" value="SF2_C_DEAD"/>
    <property type="match status" value="1"/>
</dbReference>
<dbReference type="FunFam" id="3.40.50.300:FF:000008">
    <property type="entry name" value="ATP-dependent RNA helicase RhlB"/>
    <property type="match status" value="1"/>
</dbReference>
<dbReference type="Gene3D" id="3.40.50.300">
    <property type="entry name" value="P-loop containing nucleotide triphosphate hydrolases"/>
    <property type="match status" value="2"/>
</dbReference>
<dbReference type="InterPro" id="IPR011545">
    <property type="entry name" value="DEAD/DEAH_box_helicase_dom"/>
</dbReference>
<dbReference type="InterPro" id="IPR014001">
    <property type="entry name" value="Helicase_ATP-bd"/>
</dbReference>
<dbReference type="InterPro" id="IPR001650">
    <property type="entry name" value="Helicase_C-like"/>
</dbReference>
<dbReference type="InterPro" id="IPR027417">
    <property type="entry name" value="P-loop_NTPase"/>
</dbReference>
<dbReference type="InterPro" id="IPR000629">
    <property type="entry name" value="RNA-helicase_DEAD-box_CS"/>
</dbReference>
<dbReference type="PANTHER" id="PTHR47958">
    <property type="entry name" value="ATP-DEPENDENT RNA HELICASE DBP3"/>
    <property type="match status" value="1"/>
</dbReference>
<dbReference type="Pfam" id="PF00270">
    <property type="entry name" value="DEAD"/>
    <property type="match status" value="1"/>
</dbReference>
<dbReference type="Pfam" id="PF00271">
    <property type="entry name" value="Helicase_C"/>
    <property type="match status" value="1"/>
</dbReference>
<dbReference type="SMART" id="SM00487">
    <property type="entry name" value="DEXDc"/>
    <property type="match status" value="1"/>
</dbReference>
<dbReference type="SMART" id="SM00490">
    <property type="entry name" value="HELICc"/>
    <property type="match status" value="1"/>
</dbReference>
<dbReference type="SUPFAM" id="SSF52540">
    <property type="entry name" value="P-loop containing nucleoside triphosphate hydrolases"/>
    <property type="match status" value="1"/>
</dbReference>
<dbReference type="PROSITE" id="PS00039">
    <property type="entry name" value="DEAD_ATP_HELICASE"/>
    <property type="match status" value="1"/>
</dbReference>
<dbReference type="PROSITE" id="PS51192">
    <property type="entry name" value="HELICASE_ATP_BIND_1"/>
    <property type="match status" value="1"/>
</dbReference>
<dbReference type="PROSITE" id="PS51194">
    <property type="entry name" value="HELICASE_CTER"/>
    <property type="match status" value="1"/>
</dbReference>
<evidence type="ECO:0000250" key="1"/>
<evidence type="ECO:0000255" key="2">
    <source>
        <dbReference type="PROSITE-ProRule" id="PRU00541"/>
    </source>
</evidence>
<evidence type="ECO:0000255" key="3">
    <source>
        <dbReference type="PROSITE-ProRule" id="PRU00542"/>
    </source>
</evidence>
<evidence type="ECO:0000256" key="4">
    <source>
        <dbReference type="SAM" id="MobiDB-lite"/>
    </source>
</evidence>
<evidence type="ECO:0000305" key="5"/>
<name>DBP3_ASPTN</name>
<feature type="chain" id="PRO_0000281697" description="ATP-dependent RNA helicase dbp3">
    <location>
        <begin position="1"/>
        <end position="493"/>
    </location>
</feature>
<feature type="domain" description="Helicase ATP-binding" evidence="2">
    <location>
        <begin position="109"/>
        <end position="285"/>
    </location>
</feature>
<feature type="domain" description="Helicase C-terminal" evidence="3">
    <location>
        <begin position="316"/>
        <end position="462"/>
    </location>
</feature>
<feature type="region of interest" description="Disordered" evidence="4">
    <location>
        <begin position="1"/>
        <end position="38"/>
    </location>
</feature>
<feature type="short sequence motif" description="Q motif">
    <location>
        <begin position="97"/>
        <end position="105"/>
    </location>
</feature>
<feature type="short sequence motif" description="DEAD box">
    <location>
        <begin position="232"/>
        <end position="235"/>
    </location>
</feature>
<feature type="compositionally biased region" description="Basic and acidic residues" evidence="4">
    <location>
        <begin position="23"/>
        <end position="34"/>
    </location>
</feature>
<feature type="binding site" evidence="2">
    <location>
        <begin position="122"/>
        <end position="129"/>
    </location>
    <ligand>
        <name>ATP</name>
        <dbReference type="ChEBI" id="CHEBI:30616"/>
    </ligand>
</feature>